<organism evidence="3">
    <name type="scientific">Clitoria ternatea</name>
    <name type="common">Butterfly pea</name>
    <dbReference type="NCBI Taxonomy" id="43366"/>
    <lineage>
        <taxon>Eukaryota</taxon>
        <taxon>Viridiplantae</taxon>
        <taxon>Streptophyta</taxon>
        <taxon>Embryophyta</taxon>
        <taxon>Tracheophyta</taxon>
        <taxon>Spermatophyta</taxon>
        <taxon>Magnoliopsida</taxon>
        <taxon>eudicotyledons</taxon>
        <taxon>Gunneridae</taxon>
        <taxon>Pentapetalae</taxon>
        <taxon>rosids</taxon>
        <taxon>fabids</taxon>
        <taxon>Fabales</taxon>
        <taxon>Fabaceae</taxon>
        <taxon>Papilionoideae</taxon>
        <taxon>50 kb inversion clade</taxon>
        <taxon>NPAAA clade</taxon>
        <taxon>indigoferoid/millettioid clade</taxon>
        <taxon>Phaseoleae</taxon>
        <taxon>Clitoria</taxon>
    </lineage>
</organism>
<keyword id="KW-0903">Direct protein sequencing</keyword>
<keyword id="KW-1015">Disulfide bond</keyword>
<keyword id="KW-0960">Knottin</keyword>
<keyword id="KW-0611">Plant defense</keyword>
<keyword id="KW-0732">Signal</keyword>
<comment type="function">
    <text evidence="1">Probably participates in a plant defense mechanism.</text>
</comment>
<comment type="tissue specificity">
    <text evidence="2">Expressed in seed but not in root, nodule, flower, stem, shoot, leaf and pod (at protein level).</text>
</comment>
<comment type="domain">
    <text evidence="4">The presence of a 'disulfide through disulfide knot' structurally defines this protein as a knottin.</text>
</comment>
<comment type="PTM">
    <text evidence="2">Contains 3 disulfide bonds.</text>
</comment>
<comment type="PTM">
    <text evidence="1 2">This is a cyclic peptide.</text>
</comment>
<comment type="mass spectrometry"/>
<comment type="similarity">
    <text evidence="1">Belongs to the cyclotide family. Bracelet subfamily.</text>
</comment>
<accession>C0HKG0</accession>
<dbReference type="GO" id="GO:0006952">
    <property type="term" value="P:defense response"/>
    <property type="evidence" value="ECO:0007669"/>
    <property type="project" value="UniProtKB-KW"/>
</dbReference>
<dbReference type="InterPro" id="IPR032000">
    <property type="entry name" value="Albumin_I_a"/>
</dbReference>
<dbReference type="InterPro" id="IPR005535">
    <property type="entry name" value="Cyclotide"/>
</dbReference>
<dbReference type="InterPro" id="IPR012323">
    <property type="entry name" value="Cyclotide_bracelet_CS"/>
</dbReference>
<dbReference type="InterPro" id="IPR036146">
    <property type="entry name" value="Cyclotide_sf"/>
</dbReference>
<dbReference type="Pfam" id="PF16720">
    <property type="entry name" value="Albumin_I_a"/>
    <property type="match status" value="1"/>
</dbReference>
<dbReference type="Pfam" id="PF03784">
    <property type="entry name" value="Cyclotide"/>
    <property type="match status" value="1"/>
</dbReference>
<dbReference type="SUPFAM" id="SSF57038">
    <property type="entry name" value="Cyclotides"/>
    <property type="match status" value="1"/>
</dbReference>
<dbReference type="PROSITE" id="PS51052">
    <property type="entry name" value="CYCLOTIDE"/>
    <property type="match status" value="1"/>
</dbReference>
<dbReference type="PROSITE" id="PS60008">
    <property type="entry name" value="CYCLOTIDE_BRACELET"/>
    <property type="match status" value="1"/>
</dbReference>
<evidence type="ECO:0000255" key="1">
    <source>
        <dbReference type="PROSITE-ProRule" id="PRU00395"/>
    </source>
</evidence>
<evidence type="ECO:0000269" key="2">
    <source>
    </source>
</evidence>
<evidence type="ECO:0000303" key="3">
    <source>
    </source>
</evidence>
<evidence type="ECO:0000305" key="4"/>
<evidence type="ECO:0000305" key="5">
    <source>
    </source>
</evidence>
<proteinExistence type="evidence at protein level"/>
<protein>
    <recommendedName>
        <fullName evidence="3">Cliotide T9</fullName>
    </recommendedName>
</protein>
<feature type="signal peptide" evidence="2">
    <location>
        <begin position="1"/>
        <end position="25"/>
    </location>
</feature>
<feature type="peptide" id="PRO_0000440062" description="Cliotide T9" evidence="2">
    <location>
        <begin position="26"/>
        <end position="55"/>
    </location>
</feature>
<feature type="propeptide" id="PRO_0000440063" description="Removed in mature form" evidence="5">
    <location>
        <begin position="56"/>
        <end position="117"/>
    </location>
</feature>
<feature type="disulfide bond" evidence="1">
    <location>
        <begin position="29"/>
        <end position="45"/>
    </location>
</feature>
<feature type="disulfide bond" evidence="1">
    <location>
        <begin position="33"/>
        <end position="47"/>
    </location>
</feature>
<feature type="disulfide bond" evidence="1">
    <location>
        <begin position="38"/>
        <end position="52"/>
    </location>
</feature>
<feature type="cross-link" description="Cyclopeptide (Gly-Asn)" evidence="2">
    <location>
        <begin position="26"/>
        <end position="55"/>
    </location>
</feature>
<name>CYC9_CLITE</name>
<reference evidence="4" key="1">
    <citation type="journal article" date="2011" name="J. Biol. Chem.">
        <title>Discovery and characterization of novel cyclotides originated from chimeric precursors consisting of albumin-1 chain a and cyclotide domains in the fabaceae family.</title>
        <authorList>
            <person name="Nguyen G.K."/>
            <person name="Zhang S."/>
            <person name="Nguyen N.T."/>
            <person name="Nguyen P.Q."/>
            <person name="Chiu M.S."/>
            <person name="Hardjojo A."/>
            <person name="Tam J.P."/>
        </authorList>
    </citation>
    <scope>NUCLEOTIDE SEQUENCE [MRNA]</scope>
    <scope>PROTEIN SEQUENCE OF 26-55</scope>
    <scope>PRESENCE OF DISULFIDE BONDS</scope>
    <scope>CYCLIZATION</scope>
    <scope>TISSUE SPECIFICITY</scope>
    <scope>MASS SPECTROMETRY</scope>
    <scope>IDENTIFICATION BY MASS SPECTROMETRY</scope>
</reference>
<sequence>MAYVRLACLAVIFFFAASVMFTVEAGIPCGESCVFIPCLTTVVGCSCKNKVCYNNHVIAAEANSIDDHHLLCQSHDDCIKKGTGNFCAPFLDHACQYGWCFRAESEGYLLKDFLKMP</sequence>